<accession>Q5NVI9</accession>
<sequence length="396" mass="44811">MVKETTYYDVLGVKPNATQEELKKAYRKLALKYHPDKNPNEGEKFKQISQAYEVLSDAKKRELYDKGGEQAIKEGGAGGGFGSPMDIFDMFFGGGRMQRERRGKNVVHQLSVTLEDLYNGATRKLALQKNVICDKCEGRGGKKGAVECCPNCRGTGMQIRIHQIGPGMVQQIQSVCMECQGHGERISPKDRCKSCNGRKIVREKKILEVHIDKGMKDGQKITFHGEGDQEPGLEPGDIIIVLDQKDHAVFTRRGEDLFMCMDIQLVEALCGFQKPISTLDNRTIVITSHPGQIVKHGDIKCVLNEGMPIYRRPYEKGRLIIEFKVNFPENGFLSPDKLSLLEKLLPERKEVEETDEMDQVELVDFDPNQERRRHYNGEAYEDDEHHPRGGVQCQTS</sequence>
<name>DNJA1_PONAB</name>
<feature type="chain" id="PRO_0000285807" description="DnaJ homolog subfamily A member 1">
    <location>
        <begin position="1"/>
        <end position="393"/>
    </location>
</feature>
<feature type="propeptide" id="PRO_0000396754" description="Removed in mature form" evidence="1">
    <location>
        <begin position="394"/>
        <end position="396"/>
    </location>
</feature>
<feature type="domain" description="J">
    <location>
        <begin position="6"/>
        <end position="68"/>
    </location>
</feature>
<feature type="repeat" description="CXXCXGXG motif">
    <location>
        <begin position="133"/>
        <end position="140"/>
    </location>
</feature>
<feature type="repeat" description="CXXCXGXG motif">
    <location>
        <begin position="149"/>
        <end position="156"/>
    </location>
</feature>
<feature type="repeat" description="CXXCXGXG motif">
    <location>
        <begin position="176"/>
        <end position="183"/>
    </location>
</feature>
<feature type="repeat" description="CXXCXGXG motif">
    <location>
        <begin position="192"/>
        <end position="199"/>
    </location>
</feature>
<feature type="zinc finger region" description="CR-type">
    <location>
        <begin position="120"/>
        <end position="204"/>
    </location>
</feature>
<feature type="region of interest" description="Disordered" evidence="3">
    <location>
        <begin position="351"/>
        <end position="396"/>
    </location>
</feature>
<feature type="compositionally biased region" description="Acidic residues" evidence="3">
    <location>
        <begin position="352"/>
        <end position="364"/>
    </location>
</feature>
<feature type="binding site" evidence="1">
    <location>
        <position position="133"/>
    </location>
    <ligand>
        <name>Zn(2+)</name>
        <dbReference type="ChEBI" id="CHEBI:29105"/>
        <label>1</label>
    </ligand>
</feature>
<feature type="binding site" evidence="1">
    <location>
        <position position="136"/>
    </location>
    <ligand>
        <name>Zn(2+)</name>
        <dbReference type="ChEBI" id="CHEBI:29105"/>
        <label>1</label>
    </ligand>
</feature>
<feature type="binding site" evidence="1">
    <location>
        <position position="149"/>
    </location>
    <ligand>
        <name>Zn(2+)</name>
        <dbReference type="ChEBI" id="CHEBI:29105"/>
        <label>2</label>
    </ligand>
</feature>
<feature type="binding site" evidence="1">
    <location>
        <position position="152"/>
    </location>
    <ligand>
        <name>Zn(2+)</name>
        <dbReference type="ChEBI" id="CHEBI:29105"/>
        <label>2</label>
    </ligand>
</feature>
<feature type="binding site" evidence="1">
    <location>
        <position position="176"/>
    </location>
    <ligand>
        <name>Zn(2+)</name>
        <dbReference type="ChEBI" id="CHEBI:29105"/>
        <label>2</label>
    </ligand>
</feature>
<feature type="binding site" evidence="1">
    <location>
        <position position="179"/>
    </location>
    <ligand>
        <name>Zn(2+)</name>
        <dbReference type="ChEBI" id="CHEBI:29105"/>
        <label>2</label>
    </ligand>
</feature>
<feature type="binding site" evidence="1">
    <location>
        <position position="192"/>
    </location>
    <ligand>
        <name>Zn(2+)</name>
        <dbReference type="ChEBI" id="CHEBI:29105"/>
        <label>1</label>
    </ligand>
</feature>
<feature type="binding site" evidence="1">
    <location>
        <position position="195"/>
    </location>
    <ligand>
        <name>Zn(2+)</name>
        <dbReference type="ChEBI" id="CHEBI:29105"/>
        <label>1</label>
    </ligand>
</feature>
<feature type="modified residue" description="N6-acetyllysine" evidence="2">
    <location>
        <position position="66"/>
    </location>
</feature>
<feature type="modified residue" description="Phosphoserine" evidence="2">
    <location>
        <position position="83"/>
    </location>
</feature>
<feature type="modified residue" description="Phosphoserine" evidence="2">
    <location>
        <position position="334"/>
    </location>
</feature>
<feature type="modified residue" description="Phosphotyrosine" evidence="2">
    <location>
        <position position="380"/>
    </location>
</feature>
<feature type="modified residue" description="Cysteine methyl ester" evidence="1">
    <location>
        <position position="393"/>
    </location>
</feature>
<feature type="lipid moiety-binding region" description="S-farnesyl cysteine" evidence="1">
    <location>
        <position position="393"/>
    </location>
</feature>
<comment type="function">
    <text evidence="1">Co-chaperone for HSPA8/Hsc70. Plays a role in protein transport into mitochondria via its role as co-chaperone. Functions as co-chaperone for HSPA1B and negatively regulates the translocation of BAX from the cytosol to mitochondria in response to cellular stress, thereby protecting cells against apoptosis. Stimulates ATP hydrolysis, but not the folding of unfolded proteins mediated by HSPA1A (in vitro). Promotes apoptosis in response to cellular stress mediated by exposure to anisomycin or UV (By similarity).</text>
</comment>
<comment type="subunit">
    <text evidence="2">Identified in a complex with HSPA1B and BAX. Interacts with RNF207.</text>
</comment>
<comment type="subcellular location">
    <subcellularLocation>
        <location evidence="1">Membrane</location>
        <topology evidence="1">Lipid-anchor</topology>
    </subcellularLocation>
    <subcellularLocation>
        <location evidence="1">Cytoplasm</location>
    </subcellularLocation>
    <subcellularLocation>
        <location evidence="1">Microsome</location>
    </subcellularLocation>
    <subcellularLocation>
        <location evidence="1">Mitochondrion</location>
    </subcellularLocation>
    <subcellularLocation>
        <location evidence="1">Nucleus</location>
    </subcellularLocation>
    <subcellularLocation>
        <location evidence="1">Cytoplasm</location>
        <location evidence="1">Perinuclear region</location>
    </subcellularLocation>
    <text evidence="1">Primarily cytoplasmic and associated with microsomes. A minor proportion is associated with nuclei and mitochondria (By similarity).</text>
</comment>
<dbReference type="EMBL" id="CR926041">
    <property type="protein sequence ID" value="CAI29674.1"/>
    <property type="molecule type" value="mRNA"/>
</dbReference>
<dbReference type="RefSeq" id="NP_001127102.1">
    <property type="nucleotide sequence ID" value="NM_001133630.1"/>
</dbReference>
<dbReference type="BMRB" id="Q5NVI9"/>
<dbReference type="SMR" id="Q5NVI9"/>
<dbReference type="STRING" id="9601.ENSPPYP00000021446"/>
<dbReference type="GeneID" id="100174139"/>
<dbReference type="KEGG" id="pon:100174139"/>
<dbReference type="CTD" id="3301"/>
<dbReference type="eggNOG" id="KOG0712">
    <property type="taxonomic scope" value="Eukaryota"/>
</dbReference>
<dbReference type="HOGENOM" id="CLU_017633_10_0_1"/>
<dbReference type="InParanoid" id="Q5NVI9"/>
<dbReference type="OrthoDB" id="550424at2759"/>
<dbReference type="Proteomes" id="UP000001595">
    <property type="component" value="Unplaced"/>
</dbReference>
<dbReference type="GO" id="GO:0005783">
    <property type="term" value="C:endoplasmic reticulum"/>
    <property type="evidence" value="ECO:0007669"/>
    <property type="project" value="UniProtKB-KW"/>
</dbReference>
<dbReference type="GO" id="GO:0016020">
    <property type="term" value="C:membrane"/>
    <property type="evidence" value="ECO:0007669"/>
    <property type="project" value="UniProtKB-SubCell"/>
</dbReference>
<dbReference type="GO" id="GO:0005739">
    <property type="term" value="C:mitochondrion"/>
    <property type="evidence" value="ECO:0007669"/>
    <property type="project" value="UniProtKB-SubCell"/>
</dbReference>
<dbReference type="GO" id="GO:0005634">
    <property type="term" value="C:nucleus"/>
    <property type="evidence" value="ECO:0007669"/>
    <property type="project" value="UniProtKB-SubCell"/>
</dbReference>
<dbReference type="GO" id="GO:0048471">
    <property type="term" value="C:perinuclear region of cytoplasm"/>
    <property type="evidence" value="ECO:0007669"/>
    <property type="project" value="UniProtKB-SubCell"/>
</dbReference>
<dbReference type="GO" id="GO:0005524">
    <property type="term" value="F:ATP binding"/>
    <property type="evidence" value="ECO:0007669"/>
    <property type="project" value="InterPro"/>
</dbReference>
<dbReference type="GO" id="GO:0001671">
    <property type="term" value="F:ATPase activator activity"/>
    <property type="evidence" value="ECO:0000250"/>
    <property type="project" value="UniProtKB"/>
</dbReference>
<dbReference type="GO" id="GO:0030544">
    <property type="term" value="F:Hsp70 protein binding"/>
    <property type="evidence" value="ECO:0000250"/>
    <property type="project" value="UniProtKB"/>
</dbReference>
<dbReference type="GO" id="GO:0051087">
    <property type="term" value="F:protein-folding chaperone binding"/>
    <property type="evidence" value="ECO:0000250"/>
    <property type="project" value="UniProtKB"/>
</dbReference>
<dbReference type="GO" id="GO:0051082">
    <property type="term" value="F:unfolded protein binding"/>
    <property type="evidence" value="ECO:0007669"/>
    <property type="project" value="InterPro"/>
</dbReference>
<dbReference type="GO" id="GO:0008270">
    <property type="term" value="F:zinc ion binding"/>
    <property type="evidence" value="ECO:0007669"/>
    <property type="project" value="UniProtKB-KW"/>
</dbReference>
<dbReference type="GO" id="GO:0043066">
    <property type="term" value="P:negative regulation of apoptotic process"/>
    <property type="evidence" value="ECO:0000250"/>
    <property type="project" value="UniProtKB"/>
</dbReference>
<dbReference type="GO" id="GO:0043508">
    <property type="term" value="P:negative regulation of JUN kinase activity"/>
    <property type="evidence" value="ECO:0000250"/>
    <property type="project" value="UniProtKB"/>
</dbReference>
<dbReference type="GO" id="GO:0043065">
    <property type="term" value="P:positive regulation of apoptotic process"/>
    <property type="evidence" value="ECO:0000250"/>
    <property type="project" value="UniProtKB"/>
</dbReference>
<dbReference type="GO" id="GO:0006457">
    <property type="term" value="P:protein folding"/>
    <property type="evidence" value="ECO:0007669"/>
    <property type="project" value="InterPro"/>
</dbReference>
<dbReference type="GO" id="GO:0070585">
    <property type="term" value="P:protein localization to mitochondrion"/>
    <property type="evidence" value="ECO:0000250"/>
    <property type="project" value="UniProtKB"/>
</dbReference>
<dbReference type="GO" id="GO:0051223">
    <property type="term" value="P:regulation of protein transport"/>
    <property type="evidence" value="ECO:0000250"/>
    <property type="project" value="UniProtKB"/>
</dbReference>
<dbReference type="GO" id="GO:0009408">
    <property type="term" value="P:response to heat"/>
    <property type="evidence" value="ECO:0007669"/>
    <property type="project" value="InterPro"/>
</dbReference>
<dbReference type="CDD" id="cd06257">
    <property type="entry name" value="DnaJ"/>
    <property type="match status" value="1"/>
</dbReference>
<dbReference type="CDD" id="cd10747">
    <property type="entry name" value="DnaJ_C"/>
    <property type="match status" value="1"/>
</dbReference>
<dbReference type="CDD" id="cd10719">
    <property type="entry name" value="DnaJ_zf"/>
    <property type="match status" value="1"/>
</dbReference>
<dbReference type="FunFam" id="2.60.260.20:FF:000068">
    <property type="entry name" value="Chaperone protein dnaJ 3"/>
    <property type="match status" value="1"/>
</dbReference>
<dbReference type="FunFam" id="2.10.230.10:FF:000005">
    <property type="entry name" value="DnaJ homolog subfamily A member 1"/>
    <property type="match status" value="1"/>
</dbReference>
<dbReference type="FunFam" id="1.10.287.110:FF:000014">
    <property type="entry name" value="dnaJ homolog subfamily A member 1"/>
    <property type="match status" value="1"/>
</dbReference>
<dbReference type="FunFam" id="2.60.260.20:FF:000003">
    <property type="entry name" value="DnaJ subfamily A member 2"/>
    <property type="match status" value="1"/>
</dbReference>
<dbReference type="Gene3D" id="1.10.287.110">
    <property type="entry name" value="DnaJ domain"/>
    <property type="match status" value="1"/>
</dbReference>
<dbReference type="Gene3D" id="2.10.230.10">
    <property type="entry name" value="Heat shock protein DnaJ, cysteine-rich domain"/>
    <property type="match status" value="1"/>
</dbReference>
<dbReference type="Gene3D" id="2.60.260.20">
    <property type="entry name" value="Urease metallochaperone UreE, N-terminal domain"/>
    <property type="match status" value="2"/>
</dbReference>
<dbReference type="HAMAP" id="MF_01152">
    <property type="entry name" value="DnaJ"/>
    <property type="match status" value="1"/>
</dbReference>
<dbReference type="InterPro" id="IPR012724">
    <property type="entry name" value="DnaJ"/>
</dbReference>
<dbReference type="InterPro" id="IPR002939">
    <property type="entry name" value="DnaJ_C"/>
</dbReference>
<dbReference type="InterPro" id="IPR001623">
    <property type="entry name" value="DnaJ_domain"/>
</dbReference>
<dbReference type="InterPro" id="IPR018253">
    <property type="entry name" value="DnaJ_domain_CS"/>
</dbReference>
<dbReference type="InterPro" id="IPR044713">
    <property type="entry name" value="DNJA1/2-like"/>
</dbReference>
<dbReference type="InterPro" id="IPR008971">
    <property type="entry name" value="HSP40/DnaJ_pept-bd"/>
</dbReference>
<dbReference type="InterPro" id="IPR001305">
    <property type="entry name" value="HSP_DnaJ_Cys-rich_dom"/>
</dbReference>
<dbReference type="InterPro" id="IPR036410">
    <property type="entry name" value="HSP_DnaJ_Cys-rich_dom_sf"/>
</dbReference>
<dbReference type="InterPro" id="IPR036869">
    <property type="entry name" value="J_dom_sf"/>
</dbReference>
<dbReference type="PANTHER" id="PTHR43888">
    <property type="entry name" value="DNAJ-LIKE-2, ISOFORM A-RELATED"/>
    <property type="match status" value="1"/>
</dbReference>
<dbReference type="Pfam" id="PF00226">
    <property type="entry name" value="DnaJ"/>
    <property type="match status" value="1"/>
</dbReference>
<dbReference type="Pfam" id="PF01556">
    <property type="entry name" value="DnaJ_C"/>
    <property type="match status" value="1"/>
</dbReference>
<dbReference type="Pfam" id="PF00684">
    <property type="entry name" value="DnaJ_CXXCXGXG"/>
    <property type="match status" value="1"/>
</dbReference>
<dbReference type="PRINTS" id="PR00625">
    <property type="entry name" value="JDOMAIN"/>
</dbReference>
<dbReference type="SMART" id="SM00271">
    <property type="entry name" value="DnaJ"/>
    <property type="match status" value="1"/>
</dbReference>
<dbReference type="SUPFAM" id="SSF46565">
    <property type="entry name" value="Chaperone J-domain"/>
    <property type="match status" value="1"/>
</dbReference>
<dbReference type="SUPFAM" id="SSF57938">
    <property type="entry name" value="DnaJ/Hsp40 cysteine-rich domain"/>
    <property type="match status" value="1"/>
</dbReference>
<dbReference type="SUPFAM" id="SSF49493">
    <property type="entry name" value="HSP40/DnaJ peptide-binding domain"/>
    <property type="match status" value="2"/>
</dbReference>
<dbReference type="PROSITE" id="PS00636">
    <property type="entry name" value="DNAJ_1"/>
    <property type="match status" value="1"/>
</dbReference>
<dbReference type="PROSITE" id="PS50076">
    <property type="entry name" value="DNAJ_2"/>
    <property type="match status" value="1"/>
</dbReference>
<dbReference type="PROSITE" id="PS51188">
    <property type="entry name" value="ZF_CR"/>
    <property type="match status" value="1"/>
</dbReference>
<protein>
    <recommendedName>
        <fullName>DnaJ homolog subfamily A member 1</fullName>
    </recommendedName>
</protein>
<gene>
    <name type="primary">DNAJA1</name>
</gene>
<organism>
    <name type="scientific">Pongo abelii</name>
    <name type="common">Sumatran orangutan</name>
    <name type="synonym">Pongo pygmaeus abelii</name>
    <dbReference type="NCBI Taxonomy" id="9601"/>
    <lineage>
        <taxon>Eukaryota</taxon>
        <taxon>Metazoa</taxon>
        <taxon>Chordata</taxon>
        <taxon>Craniata</taxon>
        <taxon>Vertebrata</taxon>
        <taxon>Euteleostomi</taxon>
        <taxon>Mammalia</taxon>
        <taxon>Eutheria</taxon>
        <taxon>Euarchontoglires</taxon>
        <taxon>Primates</taxon>
        <taxon>Haplorrhini</taxon>
        <taxon>Catarrhini</taxon>
        <taxon>Hominidae</taxon>
        <taxon>Pongo</taxon>
    </lineage>
</organism>
<evidence type="ECO:0000250" key="1"/>
<evidence type="ECO:0000250" key="2">
    <source>
        <dbReference type="UniProtKB" id="P31689"/>
    </source>
</evidence>
<evidence type="ECO:0000256" key="3">
    <source>
        <dbReference type="SAM" id="MobiDB-lite"/>
    </source>
</evidence>
<keyword id="KW-0007">Acetylation</keyword>
<keyword id="KW-0143">Chaperone</keyword>
<keyword id="KW-0963">Cytoplasm</keyword>
<keyword id="KW-0256">Endoplasmic reticulum</keyword>
<keyword id="KW-0449">Lipoprotein</keyword>
<keyword id="KW-0472">Membrane</keyword>
<keyword id="KW-0479">Metal-binding</keyword>
<keyword id="KW-0488">Methylation</keyword>
<keyword id="KW-0492">Microsome</keyword>
<keyword id="KW-0496">Mitochondrion</keyword>
<keyword id="KW-0539">Nucleus</keyword>
<keyword id="KW-0597">Phosphoprotein</keyword>
<keyword id="KW-0636">Prenylation</keyword>
<keyword id="KW-1185">Reference proteome</keyword>
<keyword id="KW-0677">Repeat</keyword>
<keyword id="KW-0862">Zinc</keyword>
<keyword id="KW-0863">Zinc-finger</keyword>
<reference key="1">
    <citation type="submission" date="2004-11" db="EMBL/GenBank/DDBJ databases">
        <authorList>
            <consortium name="The German cDNA consortium"/>
        </authorList>
    </citation>
    <scope>NUCLEOTIDE SEQUENCE [LARGE SCALE MRNA]</scope>
    <source>
        <tissue>Brain cortex</tissue>
    </source>
</reference>
<proteinExistence type="evidence at transcript level"/>